<evidence type="ECO:0000255" key="1">
    <source>
        <dbReference type="HAMAP-Rule" id="MF_00636"/>
    </source>
</evidence>
<feature type="chain" id="PRO_1000147364" description="Nucleotide-binding protein JTY_1457">
    <location>
        <begin position="1"/>
        <end position="301"/>
    </location>
</feature>
<feature type="binding site" evidence="1">
    <location>
        <begin position="24"/>
        <end position="31"/>
    </location>
    <ligand>
        <name>ATP</name>
        <dbReference type="ChEBI" id="CHEBI:30616"/>
    </ligand>
</feature>
<feature type="binding site" evidence="1">
    <location>
        <begin position="75"/>
        <end position="78"/>
    </location>
    <ligand>
        <name>GTP</name>
        <dbReference type="ChEBI" id="CHEBI:37565"/>
    </ligand>
</feature>
<keyword id="KW-0067">ATP-binding</keyword>
<keyword id="KW-0342">GTP-binding</keyword>
<keyword id="KW-0547">Nucleotide-binding</keyword>
<name>Y1457_MYCBT</name>
<gene>
    <name type="ordered locus">JTY_1457</name>
</gene>
<sequence>MMNHARGVENRSEGGGIDVVLVTGLSGAGRGTAAKVLEDLGWYVADNLPPQLITRMVDFGLAAGSRITQLAVVMDVRSRGFTGDLDSVRNELATRAITPRVVFMEASDDTLVRRYEQNRRSHPLQGEQTLAEGIAAERRMLAPVRATADLIIDTSTLSVGGLRDSIERAFGGDGGATTSVTVESFGFKYGLPMDADMVMDVRFLPNPHWVDELRPLTGQHPAVRDYVLHRPGAAEFLESYHRLLSLVVDGYRREGKRYMTIAIGCTGGKHRSVAIAEALMGLLRSDQQLSVRALHRDLGRE</sequence>
<organism>
    <name type="scientific">Mycobacterium bovis (strain BCG / Tokyo 172 / ATCC 35737 / TMC 1019)</name>
    <dbReference type="NCBI Taxonomy" id="561275"/>
    <lineage>
        <taxon>Bacteria</taxon>
        <taxon>Bacillati</taxon>
        <taxon>Actinomycetota</taxon>
        <taxon>Actinomycetes</taxon>
        <taxon>Mycobacteriales</taxon>
        <taxon>Mycobacteriaceae</taxon>
        <taxon>Mycobacterium</taxon>
        <taxon>Mycobacterium tuberculosis complex</taxon>
    </lineage>
</organism>
<protein>
    <recommendedName>
        <fullName evidence="1">Nucleotide-binding protein JTY_1457</fullName>
    </recommendedName>
</protein>
<dbReference type="EMBL" id="AP010918">
    <property type="protein sequence ID" value="BAH25745.1"/>
    <property type="molecule type" value="Genomic_DNA"/>
</dbReference>
<dbReference type="SMR" id="C1AN66"/>
<dbReference type="KEGG" id="mbt:JTY_1457"/>
<dbReference type="HOGENOM" id="CLU_059558_0_0_11"/>
<dbReference type="GO" id="GO:0005524">
    <property type="term" value="F:ATP binding"/>
    <property type="evidence" value="ECO:0007669"/>
    <property type="project" value="UniProtKB-UniRule"/>
</dbReference>
<dbReference type="GO" id="GO:0005525">
    <property type="term" value="F:GTP binding"/>
    <property type="evidence" value="ECO:0007669"/>
    <property type="project" value="UniProtKB-UniRule"/>
</dbReference>
<dbReference type="HAMAP" id="MF_00636">
    <property type="entry name" value="RapZ_like"/>
    <property type="match status" value="1"/>
</dbReference>
<dbReference type="InterPro" id="IPR027417">
    <property type="entry name" value="P-loop_NTPase"/>
</dbReference>
<dbReference type="InterPro" id="IPR005337">
    <property type="entry name" value="RapZ-like"/>
</dbReference>
<dbReference type="InterPro" id="IPR053930">
    <property type="entry name" value="RapZ-like_N"/>
</dbReference>
<dbReference type="InterPro" id="IPR053931">
    <property type="entry name" value="RapZ_C"/>
</dbReference>
<dbReference type="NCBIfam" id="NF003828">
    <property type="entry name" value="PRK05416.1"/>
    <property type="match status" value="1"/>
</dbReference>
<dbReference type="PANTHER" id="PTHR30448">
    <property type="entry name" value="RNASE ADAPTER PROTEIN RAPZ"/>
    <property type="match status" value="1"/>
</dbReference>
<dbReference type="PANTHER" id="PTHR30448:SF0">
    <property type="entry name" value="RNASE ADAPTER PROTEIN RAPZ"/>
    <property type="match status" value="1"/>
</dbReference>
<dbReference type="Pfam" id="PF22740">
    <property type="entry name" value="PapZ_C"/>
    <property type="match status" value="1"/>
</dbReference>
<dbReference type="Pfam" id="PF03668">
    <property type="entry name" value="RapZ-like_N"/>
    <property type="match status" value="1"/>
</dbReference>
<dbReference type="PIRSF" id="PIRSF005052">
    <property type="entry name" value="P-loopkin"/>
    <property type="match status" value="1"/>
</dbReference>
<dbReference type="SUPFAM" id="SSF52540">
    <property type="entry name" value="P-loop containing nucleoside triphosphate hydrolases"/>
    <property type="match status" value="1"/>
</dbReference>
<reference key="1">
    <citation type="journal article" date="2009" name="Vaccine">
        <title>Whole genome sequence analysis of Mycobacterium bovis bacillus Calmette-Guerin (BCG) Tokyo 172: a comparative study of BCG vaccine substrains.</title>
        <authorList>
            <person name="Seki M."/>
            <person name="Honda I."/>
            <person name="Fujita I."/>
            <person name="Yano I."/>
            <person name="Yamamoto S."/>
            <person name="Koyama A."/>
        </authorList>
    </citation>
    <scope>NUCLEOTIDE SEQUENCE [LARGE SCALE GENOMIC DNA]</scope>
    <source>
        <strain>BCG / Tokyo 172 / ATCC 35737 / TMC 1019</strain>
    </source>
</reference>
<accession>C1AN66</accession>
<proteinExistence type="inferred from homology"/>
<comment type="function">
    <text evidence="1">Displays ATPase and GTPase activities.</text>
</comment>
<comment type="similarity">
    <text evidence="1">Belongs to the RapZ-like family.</text>
</comment>